<comment type="catalytic activity">
    <reaction evidence="1">
        <text>(6R)-10-formyltetrahydrofolate + 5-amino-1-(5-phospho-beta-D-ribosyl)imidazole-4-carboxamide = 5-formamido-1-(5-phospho-D-ribosyl)imidazole-4-carboxamide + (6S)-5,6,7,8-tetrahydrofolate</text>
        <dbReference type="Rhea" id="RHEA:22192"/>
        <dbReference type="ChEBI" id="CHEBI:57453"/>
        <dbReference type="ChEBI" id="CHEBI:58467"/>
        <dbReference type="ChEBI" id="CHEBI:58475"/>
        <dbReference type="ChEBI" id="CHEBI:195366"/>
        <dbReference type="EC" id="2.1.2.3"/>
    </reaction>
</comment>
<comment type="catalytic activity">
    <reaction evidence="1">
        <text>IMP + H2O = 5-formamido-1-(5-phospho-D-ribosyl)imidazole-4-carboxamide</text>
        <dbReference type="Rhea" id="RHEA:18445"/>
        <dbReference type="ChEBI" id="CHEBI:15377"/>
        <dbReference type="ChEBI" id="CHEBI:58053"/>
        <dbReference type="ChEBI" id="CHEBI:58467"/>
        <dbReference type="EC" id="3.5.4.10"/>
    </reaction>
</comment>
<comment type="pathway">
    <text evidence="1">Purine metabolism; IMP biosynthesis via de novo pathway; 5-formamido-1-(5-phospho-D-ribosyl)imidazole-4-carboxamide from 5-amino-1-(5-phospho-D-ribosyl)imidazole-4-carboxamide (10-formyl THF route): step 1/1.</text>
</comment>
<comment type="pathway">
    <text evidence="1">Purine metabolism; IMP biosynthesis via de novo pathway; IMP from 5-formamido-1-(5-phospho-D-ribosyl)imidazole-4-carboxamide: step 1/1.</text>
</comment>
<comment type="domain">
    <text evidence="1">The IMP cyclohydrolase activity resides in the N-terminal region.</text>
</comment>
<comment type="similarity">
    <text evidence="1">Belongs to the PurH family.</text>
</comment>
<evidence type="ECO:0000255" key="1">
    <source>
        <dbReference type="HAMAP-Rule" id="MF_00139"/>
    </source>
</evidence>
<evidence type="ECO:0000255" key="2">
    <source>
        <dbReference type="PROSITE-ProRule" id="PRU01202"/>
    </source>
</evidence>
<dbReference type="EC" id="2.1.2.3" evidence="1"/>
<dbReference type="EC" id="3.5.4.10" evidence="1"/>
<dbReference type="EMBL" id="CP000964">
    <property type="protein sequence ID" value="ACI06763.1"/>
    <property type="molecule type" value="Genomic_DNA"/>
</dbReference>
<dbReference type="SMR" id="B5XYD2"/>
<dbReference type="KEGG" id="kpe:KPK_5286"/>
<dbReference type="HOGENOM" id="CLU_016316_5_2_6"/>
<dbReference type="UniPathway" id="UPA00074">
    <property type="reaction ID" value="UER00133"/>
</dbReference>
<dbReference type="UniPathway" id="UPA00074">
    <property type="reaction ID" value="UER00135"/>
</dbReference>
<dbReference type="Proteomes" id="UP000001734">
    <property type="component" value="Chromosome"/>
</dbReference>
<dbReference type="GO" id="GO:0005829">
    <property type="term" value="C:cytosol"/>
    <property type="evidence" value="ECO:0007669"/>
    <property type="project" value="TreeGrafter"/>
</dbReference>
<dbReference type="GO" id="GO:0003937">
    <property type="term" value="F:IMP cyclohydrolase activity"/>
    <property type="evidence" value="ECO:0007669"/>
    <property type="project" value="UniProtKB-UniRule"/>
</dbReference>
<dbReference type="GO" id="GO:0004643">
    <property type="term" value="F:phosphoribosylaminoimidazolecarboxamide formyltransferase activity"/>
    <property type="evidence" value="ECO:0007669"/>
    <property type="project" value="UniProtKB-UniRule"/>
</dbReference>
<dbReference type="GO" id="GO:0006189">
    <property type="term" value="P:'de novo' IMP biosynthetic process"/>
    <property type="evidence" value="ECO:0007669"/>
    <property type="project" value="UniProtKB-UniRule"/>
</dbReference>
<dbReference type="CDD" id="cd01421">
    <property type="entry name" value="IMPCH"/>
    <property type="match status" value="1"/>
</dbReference>
<dbReference type="FunFam" id="3.40.140.20:FF:000001">
    <property type="entry name" value="Bifunctional purine biosynthesis protein PurH"/>
    <property type="match status" value="1"/>
</dbReference>
<dbReference type="FunFam" id="3.40.140.20:FF:000002">
    <property type="entry name" value="Bifunctional purine biosynthesis protein PurH"/>
    <property type="match status" value="1"/>
</dbReference>
<dbReference type="FunFam" id="3.40.50.1380:FF:000001">
    <property type="entry name" value="Bifunctional purine biosynthesis protein PurH"/>
    <property type="match status" value="1"/>
</dbReference>
<dbReference type="Gene3D" id="3.40.140.20">
    <property type="match status" value="2"/>
</dbReference>
<dbReference type="Gene3D" id="3.40.50.1380">
    <property type="entry name" value="Methylglyoxal synthase-like domain"/>
    <property type="match status" value="1"/>
</dbReference>
<dbReference type="HAMAP" id="MF_00139">
    <property type="entry name" value="PurH"/>
    <property type="match status" value="1"/>
</dbReference>
<dbReference type="InterPro" id="IPR024051">
    <property type="entry name" value="AICAR_Tfase_dup_dom_sf"/>
</dbReference>
<dbReference type="InterPro" id="IPR016193">
    <property type="entry name" value="Cytidine_deaminase-like"/>
</dbReference>
<dbReference type="InterPro" id="IPR011607">
    <property type="entry name" value="MGS-like_dom"/>
</dbReference>
<dbReference type="InterPro" id="IPR036914">
    <property type="entry name" value="MGS-like_dom_sf"/>
</dbReference>
<dbReference type="InterPro" id="IPR002695">
    <property type="entry name" value="PurH-like"/>
</dbReference>
<dbReference type="NCBIfam" id="NF002049">
    <property type="entry name" value="PRK00881.1"/>
    <property type="match status" value="1"/>
</dbReference>
<dbReference type="NCBIfam" id="TIGR00355">
    <property type="entry name" value="purH"/>
    <property type="match status" value="1"/>
</dbReference>
<dbReference type="PANTHER" id="PTHR11692:SF0">
    <property type="entry name" value="BIFUNCTIONAL PURINE BIOSYNTHESIS PROTEIN ATIC"/>
    <property type="match status" value="1"/>
</dbReference>
<dbReference type="PANTHER" id="PTHR11692">
    <property type="entry name" value="BIFUNCTIONAL PURINE BIOSYNTHESIS PROTEIN PURH"/>
    <property type="match status" value="1"/>
</dbReference>
<dbReference type="Pfam" id="PF01808">
    <property type="entry name" value="AICARFT_IMPCHas"/>
    <property type="match status" value="1"/>
</dbReference>
<dbReference type="Pfam" id="PF02142">
    <property type="entry name" value="MGS"/>
    <property type="match status" value="1"/>
</dbReference>
<dbReference type="PIRSF" id="PIRSF000414">
    <property type="entry name" value="AICARFT_IMPCHas"/>
    <property type="match status" value="1"/>
</dbReference>
<dbReference type="SMART" id="SM00798">
    <property type="entry name" value="AICARFT_IMPCHas"/>
    <property type="match status" value="1"/>
</dbReference>
<dbReference type="SMART" id="SM00851">
    <property type="entry name" value="MGS"/>
    <property type="match status" value="1"/>
</dbReference>
<dbReference type="SUPFAM" id="SSF53927">
    <property type="entry name" value="Cytidine deaminase-like"/>
    <property type="match status" value="1"/>
</dbReference>
<dbReference type="SUPFAM" id="SSF52335">
    <property type="entry name" value="Methylglyoxal synthase-like"/>
    <property type="match status" value="1"/>
</dbReference>
<dbReference type="PROSITE" id="PS51855">
    <property type="entry name" value="MGS"/>
    <property type="match status" value="1"/>
</dbReference>
<protein>
    <recommendedName>
        <fullName evidence="1">Bifunctional purine biosynthesis protein PurH</fullName>
    </recommendedName>
    <domain>
        <recommendedName>
            <fullName evidence="1">Phosphoribosylaminoimidazolecarboxamide formyltransferase</fullName>
            <ecNumber evidence="1">2.1.2.3</ecNumber>
        </recommendedName>
        <alternativeName>
            <fullName evidence="1">AICAR transformylase</fullName>
        </alternativeName>
    </domain>
    <domain>
        <recommendedName>
            <fullName evidence="1">IMP cyclohydrolase</fullName>
            <ecNumber evidence="1">3.5.4.10</ecNumber>
        </recommendedName>
        <alternativeName>
            <fullName evidence="1">ATIC</fullName>
        </alternativeName>
        <alternativeName>
            <fullName evidence="1">IMP synthase</fullName>
        </alternativeName>
        <alternativeName>
            <fullName evidence="1">Inosinicase</fullName>
        </alternativeName>
    </domain>
</protein>
<name>PUR9_KLEP3</name>
<reference key="1">
    <citation type="journal article" date="2008" name="PLoS Genet.">
        <title>Complete genome sequence of the N2-fixing broad host range endophyte Klebsiella pneumoniae 342 and virulence predictions verified in mice.</title>
        <authorList>
            <person name="Fouts D.E."/>
            <person name="Tyler H.L."/>
            <person name="DeBoy R.T."/>
            <person name="Daugherty S."/>
            <person name="Ren Q."/>
            <person name="Badger J.H."/>
            <person name="Durkin A.S."/>
            <person name="Huot H."/>
            <person name="Shrivastava S."/>
            <person name="Kothari S."/>
            <person name="Dodson R.J."/>
            <person name="Mohamoud Y."/>
            <person name="Khouri H."/>
            <person name="Roesch L.F.W."/>
            <person name="Krogfelt K.A."/>
            <person name="Struve C."/>
            <person name="Triplett E.W."/>
            <person name="Methe B.A."/>
        </authorList>
    </citation>
    <scope>NUCLEOTIDE SEQUENCE [LARGE SCALE GENOMIC DNA]</scope>
    <source>
        <strain>342</strain>
    </source>
</reference>
<keyword id="KW-0378">Hydrolase</keyword>
<keyword id="KW-0511">Multifunctional enzyme</keyword>
<keyword id="KW-0658">Purine biosynthesis</keyword>
<keyword id="KW-0808">Transferase</keyword>
<sequence>MQQRRPVRRALLSVSDKAGIVEFAQALTARGVELLSTGGTARLLADKGLPVTEVSDYTGFPEMMDGRVKTLHPKVHGGILGRRGQDDGIMQQHGIAPIDMVVVNLYPFAQTVAREGCSLEDAVENIDIGGPTMVRSAAKNHKDVAIVVKSSDYDAIINEMDANEGSLTLNTRFDLAIKAFEHTAAYDSMIANYFGSMVPAYHGESQEAAGRFPRTLNLNFIKKQDMRYGENSHQQAAFYIEENVKEASVATATQLQGKALSYNNIADTDAALECVKEFNEPACVIVKHANPCGVAVSNSILDAYDRAYKTDPTSAFGGIIAFNRELDAETAQAIISRQFVEVIIAPSASEEALKITAAKQNVRVLTCGQWDARVAGLDFKRVNGGLLVQDRDLGMVTAGELRVVSKRQPSEQELRDALFCWKVAKFVKSNAIVYAKDNMTIGIGAGQMSRVYSAKIAGIKAGDEGLEVKGSAMASDAFFPFRDGIDAAAAVGITCVIQPGGSIRDDEVIAAADEHGIAMIFTDMRHFRH</sequence>
<accession>B5XYD2</accession>
<proteinExistence type="inferred from homology"/>
<feature type="chain" id="PRO_1000096067" description="Bifunctional purine biosynthesis protein PurH">
    <location>
        <begin position="1"/>
        <end position="529"/>
    </location>
</feature>
<feature type="domain" description="MGS-like" evidence="2">
    <location>
        <begin position="1"/>
        <end position="148"/>
    </location>
</feature>
<gene>
    <name evidence="1" type="primary">purH</name>
    <name type="ordered locus">KPK_5286</name>
</gene>
<organism>
    <name type="scientific">Klebsiella pneumoniae (strain 342)</name>
    <dbReference type="NCBI Taxonomy" id="507522"/>
    <lineage>
        <taxon>Bacteria</taxon>
        <taxon>Pseudomonadati</taxon>
        <taxon>Pseudomonadota</taxon>
        <taxon>Gammaproteobacteria</taxon>
        <taxon>Enterobacterales</taxon>
        <taxon>Enterobacteriaceae</taxon>
        <taxon>Klebsiella/Raoultella group</taxon>
        <taxon>Klebsiella</taxon>
        <taxon>Klebsiella pneumoniae complex</taxon>
    </lineage>
</organism>